<dbReference type="EC" id="2.1.1.182" evidence="1"/>
<dbReference type="EMBL" id="CP000611">
    <property type="protein sequence ID" value="ABQ72753.1"/>
    <property type="molecule type" value="Genomic_DNA"/>
</dbReference>
<dbReference type="RefSeq" id="WP_003405191.1">
    <property type="nucleotide sequence ID" value="NZ_CP016972.1"/>
</dbReference>
<dbReference type="SMR" id="A5U153"/>
<dbReference type="GeneID" id="45424982"/>
<dbReference type="KEGG" id="mra:MRA_1019"/>
<dbReference type="eggNOG" id="COG0030">
    <property type="taxonomic scope" value="Bacteria"/>
</dbReference>
<dbReference type="HOGENOM" id="CLU_041220_1_1_11"/>
<dbReference type="Proteomes" id="UP000001988">
    <property type="component" value="Chromosome"/>
</dbReference>
<dbReference type="GO" id="GO:0005829">
    <property type="term" value="C:cytosol"/>
    <property type="evidence" value="ECO:0007669"/>
    <property type="project" value="TreeGrafter"/>
</dbReference>
<dbReference type="GO" id="GO:0052908">
    <property type="term" value="F:16S rRNA (adenine(1518)-N(6)/adenine(1519)-N(6))-dimethyltransferase activity"/>
    <property type="evidence" value="ECO:0007669"/>
    <property type="project" value="UniProtKB-EC"/>
</dbReference>
<dbReference type="GO" id="GO:0003723">
    <property type="term" value="F:RNA binding"/>
    <property type="evidence" value="ECO:0007669"/>
    <property type="project" value="UniProtKB-KW"/>
</dbReference>
<dbReference type="CDD" id="cd02440">
    <property type="entry name" value="AdoMet_MTases"/>
    <property type="match status" value="1"/>
</dbReference>
<dbReference type="FunFam" id="1.10.8.100:FF:000003">
    <property type="entry name" value="Ribosomal RNA small subunit methyltransferase A"/>
    <property type="match status" value="1"/>
</dbReference>
<dbReference type="FunFam" id="3.40.50.150:FF:000023">
    <property type="entry name" value="Ribosomal RNA small subunit methyltransferase A"/>
    <property type="match status" value="1"/>
</dbReference>
<dbReference type="Gene3D" id="1.10.8.100">
    <property type="entry name" value="Ribosomal RNA adenine dimethylase-like, domain 2"/>
    <property type="match status" value="1"/>
</dbReference>
<dbReference type="Gene3D" id="3.40.50.150">
    <property type="entry name" value="Vaccinia Virus protein VP39"/>
    <property type="match status" value="1"/>
</dbReference>
<dbReference type="HAMAP" id="MF_00607">
    <property type="entry name" value="16SrRNA_methyltr_A"/>
    <property type="match status" value="1"/>
</dbReference>
<dbReference type="InterPro" id="IPR001737">
    <property type="entry name" value="KsgA/Erm"/>
</dbReference>
<dbReference type="InterPro" id="IPR023165">
    <property type="entry name" value="rRNA_Ade_diMease-like_C"/>
</dbReference>
<dbReference type="InterPro" id="IPR020596">
    <property type="entry name" value="rRNA_Ade_Mease_Trfase_CS"/>
</dbReference>
<dbReference type="InterPro" id="IPR020598">
    <property type="entry name" value="rRNA_Ade_methylase_Trfase_N"/>
</dbReference>
<dbReference type="InterPro" id="IPR011530">
    <property type="entry name" value="rRNA_adenine_dimethylase"/>
</dbReference>
<dbReference type="InterPro" id="IPR029063">
    <property type="entry name" value="SAM-dependent_MTases_sf"/>
</dbReference>
<dbReference type="NCBIfam" id="TIGR00755">
    <property type="entry name" value="ksgA"/>
    <property type="match status" value="1"/>
</dbReference>
<dbReference type="PANTHER" id="PTHR11727">
    <property type="entry name" value="DIMETHYLADENOSINE TRANSFERASE"/>
    <property type="match status" value="1"/>
</dbReference>
<dbReference type="PANTHER" id="PTHR11727:SF7">
    <property type="entry name" value="DIMETHYLADENOSINE TRANSFERASE-RELATED"/>
    <property type="match status" value="1"/>
</dbReference>
<dbReference type="Pfam" id="PF00398">
    <property type="entry name" value="RrnaAD"/>
    <property type="match status" value="1"/>
</dbReference>
<dbReference type="SMART" id="SM00650">
    <property type="entry name" value="rADc"/>
    <property type="match status" value="1"/>
</dbReference>
<dbReference type="SUPFAM" id="SSF53335">
    <property type="entry name" value="S-adenosyl-L-methionine-dependent methyltransferases"/>
    <property type="match status" value="1"/>
</dbReference>
<dbReference type="PROSITE" id="PS01131">
    <property type="entry name" value="RRNA_A_DIMETH"/>
    <property type="match status" value="1"/>
</dbReference>
<dbReference type="PROSITE" id="PS51689">
    <property type="entry name" value="SAM_RNA_A_N6_MT"/>
    <property type="match status" value="1"/>
</dbReference>
<keyword id="KW-0963">Cytoplasm</keyword>
<keyword id="KW-0489">Methyltransferase</keyword>
<keyword id="KW-1185">Reference proteome</keyword>
<keyword id="KW-0694">RNA-binding</keyword>
<keyword id="KW-0698">rRNA processing</keyword>
<keyword id="KW-0949">S-adenosyl-L-methionine</keyword>
<keyword id="KW-0808">Transferase</keyword>
<organism>
    <name type="scientific">Mycobacterium tuberculosis (strain ATCC 25177 / H37Ra)</name>
    <dbReference type="NCBI Taxonomy" id="419947"/>
    <lineage>
        <taxon>Bacteria</taxon>
        <taxon>Bacillati</taxon>
        <taxon>Actinomycetota</taxon>
        <taxon>Actinomycetes</taxon>
        <taxon>Mycobacteriales</taxon>
        <taxon>Mycobacteriaceae</taxon>
        <taxon>Mycobacterium</taxon>
        <taxon>Mycobacterium tuberculosis complex</taxon>
    </lineage>
</organism>
<feature type="chain" id="PRO_1000056641" description="Ribosomal RNA small subunit methyltransferase A">
    <location>
        <begin position="1"/>
        <end position="317"/>
    </location>
</feature>
<feature type="region of interest" description="Disordered" evidence="2">
    <location>
        <begin position="293"/>
        <end position="317"/>
    </location>
</feature>
<feature type="binding site" evidence="1">
    <location>
        <position position="37"/>
    </location>
    <ligand>
        <name>S-adenosyl-L-methionine</name>
        <dbReference type="ChEBI" id="CHEBI:59789"/>
    </ligand>
</feature>
<feature type="binding site" evidence="1">
    <location>
        <position position="39"/>
    </location>
    <ligand>
        <name>S-adenosyl-L-methionine</name>
        <dbReference type="ChEBI" id="CHEBI:59789"/>
    </ligand>
</feature>
<feature type="binding site" evidence="1">
    <location>
        <position position="64"/>
    </location>
    <ligand>
        <name>S-adenosyl-L-methionine</name>
        <dbReference type="ChEBI" id="CHEBI:59789"/>
    </ligand>
</feature>
<feature type="binding site" evidence="1">
    <location>
        <position position="85"/>
    </location>
    <ligand>
        <name>S-adenosyl-L-methionine</name>
        <dbReference type="ChEBI" id="CHEBI:59789"/>
    </ligand>
</feature>
<feature type="binding site" evidence="1">
    <location>
        <position position="115"/>
    </location>
    <ligand>
        <name>S-adenosyl-L-methionine</name>
        <dbReference type="ChEBI" id="CHEBI:59789"/>
    </ligand>
</feature>
<feature type="binding site" evidence="1">
    <location>
        <position position="134"/>
    </location>
    <ligand>
        <name>S-adenosyl-L-methionine</name>
        <dbReference type="ChEBI" id="CHEBI:59789"/>
    </ligand>
</feature>
<protein>
    <recommendedName>
        <fullName evidence="1">Ribosomal RNA small subunit methyltransferase A</fullName>
        <ecNumber evidence="1">2.1.1.182</ecNumber>
    </recommendedName>
    <alternativeName>
        <fullName evidence="1">16S rRNA (adenine(1518)-N(6)/adenine(1519)-N(6))-dimethyltransferase</fullName>
    </alternativeName>
    <alternativeName>
        <fullName evidence="1">16S rRNA dimethyladenosine transferase</fullName>
    </alternativeName>
    <alternativeName>
        <fullName evidence="1">16S rRNA dimethylase</fullName>
    </alternativeName>
    <alternativeName>
        <fullName evidence="1">S-adenosylmethionine-6-N', N'-adenosyl(rRNA) dimethyltransferase</fullName>
    </alternativeName>
</protein>
<gene>
    <name evidence="1" type="primary">rsmA</name>
    <name evidence="1" type="synonym">ksgA</name>
    <name type="ordered locus">MRA_1019</name>
</gene>
<name>RSMA_MYCTA</name>
<comment type="function">
    <text evidence="1">Specifically dimethylates two adjacent adenosines (A1518 and A1519) in the loop of a conserved hairpin near the 3'-end of 16S rRNA in the 30S particle. May play a critical role in biogenesis of 30S subunits.</text>
</comment>
<comment type="catalytic activity">
    <reaction evidence="1">
        <text>adenosine(1518)/adenosine(1519) in 16S rRNA + 4 S-adenosyl-L-methionine = N(6)-dimethyladenosine(1518)/N(6)-dimethyladenosine(1519) in 16S rRNA + 4 S-adenosyl-L-homocysteine + 4 H(+)</text>
        <dbReference type="Rhea" id="RHEA:19609"/>
        <dbReference type="Rhea" id="RHEA-COMP:10232"/>
        <dbReference type="Rhea" id="RHEA-COMP:10233"/>
        <dbReference type="ChEBI" id="CHEBI:15378"/>
        <dbReference type="ChEBI" id="CHEBI:57856"/>
        <dbReference type="ChEBI" id="CHEBI:59789"/>
        <dbReference type="ChEBI" id="CHEBI:74411"/>
        <dbReference type="ChEBI" id="CHEBI:74493"/>
        <dbReference type="EC" id="2.1.1.182"/>
    </reaction>
</comment>
<comment type="subcellular location">
    <subcellularLocation>
        <location evidence="1">Cytoplasm</location>
    </subcellularLocation>
</comment>
<comment type="similarity">
    <text evidence="1">Belongs to the class I-like SAM-binding methyltransferase superfamily. rRNA adenine N(6)-methyltransferase family. RsmA subfamily.</text>
</comment>
<reference key="1">
    <citation type="journal article" date="2008" name="PLoS ONE">
        <title>Genetic basis of virulence attenuation revealed by comparative genomic analysis of Mycobacterium tuberculosis strain H37Ra versus H37Rv.</title>
        <authorList>
            <person name="Zheng H."/>
            <person name="Lu L."/>
            <person name="Wang B."/>
            <person name="Pu S."/>
            <person name="Zhang X."/>
            <person name="Zhu G."/>
            <person name="Shi W."/>
            <person name="Zhang L."/>
            <person name="Wang H."/>
            <person name="Wang S."/>
            <person name="Zhao G."/>
            <person name="Zhang Y."/>
        </authorList>
    </citation>
    <scope>NUCLEOTIDE SEQUENCE [LARGE SCALE GENOMIC DNA]</scope>
    <source>
        <strain>ATCC 25177 / H37Ra</strain>
    </source>
</reference>
<accession>A5U153</accession>
<evidence type="ECO:0000255" key="1">
    <source>
        <dbReference type="HAMAP-Rule" id="MF_00607"/>
    </source>
</evidence>
<evidence type="ECO:0000256" key="2">
    <source>
        <dbReference type="SAM" id="MobiDB-lite"/>
    </source>
</evidence>
<proteinExistence type="inferred from homology"/>
<sequence>MCCTSGCALTIRLLGRTEIRRLAKELDFRPRKSLGQNFVHDANTVRRVVAASGVSRSDLVLEVGPGLGSLTLALLDRGATVTAVEIDPLLASRLQQTVAEHSHSEVHRLTVVNRDVLALRREDLAAAPTAVVANLPYNVAVPALLHLLVEFPSIRVVTVMVQAEVAERLAAEPGSKEYGVPSVKLRFFGRVRRCGMVSPTVFWPIPRVYSGLVRIDRYETSPWPTDDAFRRRVFELVDIAFAQRRKTSRNAFVQWAGSGSESANRLLAASIDPARRGETLSIDDFVRLLRRSGGSDEATSTGRDARAPDISGHASAS</sequence>